<reference key="1">
    <citation type="journal article" date="2005" name="Genome Res.">
        <title>Sequence, annotation, and analysis of synteny between rice chromosome 3 and diverged grass species.</title>
        <authorList>
            <consortium name="The rice chromosome 3 sequencing consortium"/>
            <person name="Buell C.R."/>
            <person name="Yuan Q."/>
            <person name="Ouyang S."/>
            <person name="Liu J."/>
            <person name="Zhu W."/>
            <person name="Wang A."/>
            <person name="Maiti R."/>
            <person name="Haas B."/>
            <person name="Wortman J."/>
            <person name="Pertea M."/>
            <person name="Jones K.M."/>
            <person name="Kim M."/>
            <person name="Overton L."/>
            <person name="Tsitrin T."/>
            <person name="Fadrosh D."/>
            <person name="Bera J."/>
            <person name="Weaver B."/>
            <person name="Jin S."/>
            <person name="Johri S."/>
            <person name="Reardon M."/>
            <person name="Webb K."/>
            <person name="Hill J."/>
            <person name="Moffat K."/>
            <person name="Tallon L."/>
            <person name="Van Aken S."/>
            <person name="Lewis M."/>
            <person name="Utterback T."/>
            <person name="Feldblyum T."/>
            <person name="Zismann V."/>
            <person name="Iobst S."/>
            <person name="Hsiao J."/>
            <person name="de Vazeille A.R."/>
            <person name="Salzberg S.L."/>
            <person name="White O."/>
            <person name="Fraser C.M."/>
            <person name="Yu Y."/>
            <person name="Kim H."/>
            <person name="Rambo T."/>
            <person name="Currie J."/>
            <person name="Collura K."/>
            <person name="Kernodle-Thompson S."/>
            <person name="Wei F."/>
            <person name="Kudrna K."/>
            <person name="Ammiraju J.S.S."/>
            <person name="Luo M."/>
            <person name="Goicoechea J.L."/>
            <person name="Wing R.A."/>
            <person name="Henry D."/>
            <person name="Oates R."/>
            <person name="Palmer M."/>
            <person name="Pries G."/>
            <person name="Saski C."/>
            <person name="Simmons J."/>
            <person name="Soderlund C."/>
            <person name="Nelson W."/>
            <person name="de la Bastide M."/>
            <person name="Spiegel L."/>
            <person name="Nascimento L."/>
            <person name="Huang E."/>
            <person name="Preston R."/>
            <person name="Zutavern T."/>
            <person name="Palmer L."/>
            <person name="O'Shaughnessy A."/>
            <person name="Dike S."/>
            <person name="McCombie W.R."/>
            <person name="Minx P."/>
            <person name="Cordum H."/>
            <person name="Wilson R."/>
            <person name="Jin W."/>
            <person name="Lee H.R."/>
            <person name="Jiang J."/>
            <person name="Jackson S."/>
        </authorList>
    </citation>
    <scope>NUCLEOTIDE SEQUENCE [LARGE SCALE GENOMIC DNA]</scope>
    <source>
        <strain>cv. Nipponbare</strain>
    </source>
</reference>
<reference key="2">
    <citation type="journal article" date="2005" name="Nature">
        <title>The map-based sequence of the rice genome.</title>
        <authorList>
            <consortium name="International rice genome sequencing project (IRGSP)"/>
        </authorList>
    </citation>
    <scope>NUCLEOTIDE SEQUENCE [LARGE SCALE GENOMIC DNA]</scope>
    <source>
        <strain>cv. Nipponbare</strain>
    </source>
</reference>
<reference key="3">
    <citation type="journal article" date="2008" name="Nucleic Acids Res.">
        <title>The rice annotation project database (RAP-DB): 2008 update.</title>
        <authorList>
            <consortium name="The rice annotation project (RAP)"/>
        </authorList>
    </citation>
    <scope>GENOME REANNOTATION</scope>
    <source>
        <strain>cv. Nipponbare</strain>
    </source>
</reference>
<reference key="4">
    <citation type="journal article" date="2013" name="Rice">
        <title>Improvement of the Oryza sativa Nipponbare reference genome using next generation sequence and optical map data.</title>
        <authorList>
            <person name="Kawahara Y."/>
            <person name="de la Bastide M."/>
            <person name="Hamilton J.P."/>
            <person name="Kanamori H."/>
            <person name="McCombie W.R."/>
            <person name="Ouyang S."/>
            <person name="Schwartz D.C."/>
            <person name="Tanaka T."/>
            <person name="Wu J."/>
            <person name="Zhou S."/>
            <person name="Childs K.L."/>
            <person name="Davidson R.M."/>
            <person name="Lin H."/>
            <person name="Quesada-Ocampo L."/>
            <person name="Vaillancourt B."/>
            <person name="Sakai H."/>
            <person name="Lee S.S."/>
            <person name="Kim J."/>
            <person name="Numa H."/>
            <person name="Itoh T."/>
            <person name="Buell C.R."/>
            <person name="Matsumoto T."/>
        </authorList>
    </citation>
    <scope>GENOME REANNOTATION</scope>
    <source>
        <strain>cv. Nipponbare</strain>
    </source>
</reference>
<reference key="5">
    <citation type="journal article" date="2005" name="PLoS Biol.">
        <title>The genomes of Oryza sativa: a history of duplications.</title>
        <authorList>
            <person name="Yu J."/>
            <person name="Wang J."/>
            <person name="Lin W."/>
            <person name="Li S."/>
            <person name="Li H."/>
            <person name="Zhou J."/>
            <person name="Ni P."/>
            <person name="Dong W."/>
            <person name="Hu S."/>
            <person name="Zeng C."/>
            <person name="Zhang J."/>
            <person name="Zhang Y."/>
            <person name="Li R."/>
            <person name="Xu Z."/>
            <person name="Li S."/>
            <person name="Li X."/>
            <person name="Zheng H."/>
            <person name="Cong L."/>
            <person name="Lin L."/>
            <person name="Yin J."/>
            <person name="Geng J."/>
            <person name="Li G."/>
            <person name="Shi J."/>
            <person name="Liu J."/>
            <person name="Lv H."/>
            <person name="Li J."/>
            <person name="Wang J."/>
            <person name="Deng Y."/>
            <person name="Ran L."/>
            <person name="Shi X."/>
            <person name="Wang X."/>
            <person name="Wu Q."/>
            <person name="Li C."/>
            <person name="Ren X."/>
            <person name="Wang J."/>
            <person name="Wang X."/>
            <person name="Li D."/>
            <person name="Liu D."/>
            <person name="Zhang X."/>
            <person name="Ji Z."/>
            <person name="Zhao W."/>
            <person name="Sun Y."/>
            <person name="Zhang Z."/>
            <person name="Bao J."/>
            <person name="Han Y."/>
            <person name="Dong L."/>
            <person name="Ji J."/>
            <person name="Chen P."/>
            <person name="Wu S."/>
            <person name="Liu J."/>
            <person name="Xiao Y."/>
            <person name="Bu D."/>
            <person name="Tan J."/>
            <person name="Yang L."/>
            <person name="Ye C."/>
            <person name="Zhang J."/>
            <person name="Xu J."/>
            <person name="Zhou Y."/>
            <person name="Yu Y."/>
            <person name="Zhang B."/>
            <person name="Zhuang S."/>
            <person name="Wei H."/>
            <person name="Liu B."/>
            <person name="Lei M."/>
            <person name="Yu H."/>
            <person name="Li Y."/>
            <person name="Xu H."/>
            <person name="Wei S."/>
            <person name="He X."/>
            <person name="Fang L."/>
            <person name="Zhang Z."/>
            <person name="Zhang Y."/>
            <person name="Huang X."/>
            <person name="Su Z."/>
            <person name="Tong W."/>
            <person name="Li J."/>
            <person name="Tong Z."/>
            <person name="Li S."/>
            <person name="Ye J."/>
            <person name="Wang L."/>
            <person name="Fang L."/>
            <person name="Lei T."/>
            <person name="Chen C.-S."/>
            <person name="Chen H.-C."/>
            <person name="Xu Z."/>
            <person name="Li H."/>
            <person name="Huang H."/>
            <person name="Zhang F."/>
            <person name="Xu H."/>
            <person name="Li N."/>
            <person name="Zhao C."/>
            <person name="Li S."/>
            <person name="Dong L."/>
            <person name="Huang Y."/>
            <person name="Li L."/>
            <person name="Xi Y."/>
            <person name="Qi Q."/>
            <person name="Li W."/>
            <person name="Zhang B."/>
            <person name="Hu W."/>
            <person name="Zhang Y."/>
            <person name="Tian X."/>
            <person name="Jiao Y."/>
            <person name="Liang X."/>
            <person name="Jin J."/>
            <person name="Gao L."/>
            <person name="Zheng W."/>
            <person name="Hao B."/>
            <person name="Liu S.-M."/>
            <person name="Wang W."/>
            <person name="Yuan L."/>
            <person name="Cao M."/>
            <person name="McDermott J."/>
            <person name="Samudrala R."/>
            <person name="Wang J."/>
            <person name="Wong G.K.-S."/>
            <person name="Yang H."/>
        </authorList>
    </citation>
    <scope>NUCLEOTIDE SEQUENCE [LARGE SCALE GENOMIC DNA]</scope>
    <source>
        <strain>cv. Nipponbare</strain>
    </source>
</reference>
<reference key="6">
    <citation type="journal article" date="2003" name="Science">
        <title>Collection, mapping, and annotation of over 28,000 cDNA clones from japonica rice.</title>
        <authorList>
            <consortium name="The rice full-length cDNA consortium"/>
        </authorList>
    </citation>
    <scope>NUCLEOTIDE SEQUENCE [LARGE SCALE MRNA]</scope>
    <source>
        <strain>cv. Nipponbare</strain>
    </source>
</reference>
<reference key="7">
    <citation type="journal article" date="2007" name="Nature">
        <title>Direct control of shoot meristem activity by a cytokinin-activating enzyme.</title>
        <authorList>
            <person name="Kurakawa T."/>
            <person name="Ueda N."/>
            <person name="Maekawa M."/>
            <person name="Kobayashi K."/>
            <person name="Kojima M."/>
            <person name="Nagato Y."/>
            <person name="Sakakibara H."/>
            <person name="Kyozuka J."/>
        </authorList>
    </citation>
    <scope>IDENTIFICATION</scope>
    <scope>TISSUE SPECIFICITY</scope>
</reference>
<reference key="8">
    <citation type="journal article" date="2009" name="Plant Cell">
        <title>Functional analyses of LONELY GUY cytokinin-activating enzymes reveal the importance of the direct activation pathway in Arabidopsis.</title>
        <authorList>
            <person name="Kuroha T."/>
            <person name="Tokunaga H."/>
            <person name="Kojima M."/>
            <person name="Ueda N."/>
            <person name="Ishida T."/>
            <person name="Nagawa S."/>
            <person name="Fukuda H."/>
            <person name="Sugimoto K."/>
            <person name="Sakakibara H."/>
        </authorList>
    </citation>
    <scope>GENE FAMILY</scope>
    <scope>NOMENCLATURE</scope>
</reference>
<evidence type="ECO:0000250" key="1"/>
<evidence type="ECO:0000250" key="2">
    <source>
        <dbReference type="UniProtKB" id="B2HS63"/>
    </source>
</evidence>
<evidence type="ECO:0000269" key="3">
    <source>
    </source>
</evidence>
<evidence type="ECO:0000305" key="4"/>
<organism>
    <name type="scientific">Oryza sativa subsp. japonica</name>
    <name type="common">Rice</name>
    <dbReference type="NCBI Taxonomy" id="39947"/>
    <lineage>
        <taxon>Eukaryota</taxon>
        <taxon>Viridiplantae</taxon>
        <taxon>Streptophyta</taxon>
        <taxon>Embryophyta</taxon>
        <taxon>Tracheophyta</taxon>
        <taxon>Spermatophyta</taxon>
        <taxon>Magnoliopsida</taxon>
        <taxon>Liliopsida</taxon>
        <taxon>Poales</taxon>
        <taxon>Poaceae</taxon>
        <taxon>BOP clade</taxon>
        <taxon>Oryzoideae</taxon>
        <taxon>Oryzeae</taxon>
        <taxon>Oryzinae</taxon>
        <taxon>Oryza</taxon>
        <taxon>Oryza sativa</taxon>
    </lineage>
</organism>
<feature type="chain" id="PRO_0000395055" description="Probable cytokinin riboside 5'-monophosphate phosphoribohydrolase LOGL3">
    <location>
        <begin position="1"/>
        <end position="211"/>
    </location>
</feature>
<feature type="binding site" evidence="2">
    <location>
        <position position="84"/>
    </location>
    <ligand>
        <name>substrate</name>
    </ligand>
</feature>
<feature type="binding site" evidence="2">
    <location>
        <begin position="102"/>
        <end position="103"/>
    </location>
    <ligand>
        <name>substrate</name>
    </ligand>
</feature>
<feature type="binding site" evidence="2">
    <location>
        <begin position="119"/>
        <end position="125"/>
    </location>
    <ligand>
        <name>substrate</name>
    </ligand>
</feature>
<feature type="binding site" evidence="2">
    <location>
        <position position="131"/>
    </location>
    <ligand>
        <name>substrate</name>
    </ligand>
</feature>
<feature type="sequence conflict" description="In Ref. 6; AK099538." evidence="4" ref="6">
    <original>G</original>
    <variation>V</variation>
    <location>
        <position position="68"/>
    </location>
</feature>
<gene>
    <name type="primary">LOGL3</name>
    <name type="ordered locus">Os03g0109300</name>
    <name type="ordered locus">LOC_Os03g01880</name>
    <name type="ORF">OsJ_09119</name>
    <name type="ORF">OSJNBb0043C10.13</name>
</gene>
<accession>Q8H7U8</accession>
<accession>A0A0P0VS49</accession>
<accession>Q10SW3</accession>
<sequence length="211" mass="23222">MRQQQQQQQESRFKRTCVFCGSSQGNKTTYRDAAVDLAKELVARGIDLVYGGGSIGLMGLVSQAVYDGGRHVIGVIPKTLMTPEIIGETVGEVRPVSDMHQRKAEMARQSDAFIALPGGYGTLEELLEVITWAQLGIHHKPVGLLNVDGYYNSLLTFIDQAVEEGFISPSARRIIVSAPTAQELMDKLEEYVPYHDRVASGLNWETGHLGF</sequence>
<keyword id="KW-0203">Cytokinin biosynthesis</keyword>
<keyword id="KW-0378">Hydrolase</keyword>
<keyword id="KW-1185">Reference proteome</keyword>
<dbReference type="EC" id="3.2.2.n1"/>
<dbReference type="EMBL" id="AC105733">
    <property type="protein sequence ID" value="AAN61486.1"/>
    <property type="molecule type" value="Genomic_DNA"/>
</dbReference>
<dbReference type="EMBL" id="DP000009">
    <property type="protein sequence ID" value="ABF93572.1"/>
    <property type="molecule type" value="Genomic_DNA"/>
</dbReference>
<dbReference type="EMBL" id="DP000009">
    <property type="protein sequence ID" value="ABF93573.1"/>
    <property type="status" value="ALT_SEQ"/>
    <property type="molecule type" value="Genomic_DNA"/>
</dbReference>
<dbReference type="EMBL" id="AP008209">
    <property type="protein sequence ID" value="BAF10620.1"/>
    <property type="molecule type" value="Genomic_DNA"/>
</dbReference>
<dbReference type="EMBL" id="AP014959">
    <property type="protein sequence ID" value="BAS81902.1"/>
    <property type="molecule type" value="Genomic_DNA"/>
</dbReference>
<dbReference type="EMBL" id="CM000140">
    <property type="protein sequence ID" value="EAZ25308.1"/>
    <property type="molecule type" value="Genomic_DNA"/>
</dbReference>
<dbReference type="EMBL" id="AK099538">
    <property type="status" value="NOT_ANNOTATED_CDS"/>
    <property type="molecule type" value="mRNA"/>
</dbReference>
<dbReference type="RefSeq" id="XP_015628428.1">
    <property type="nucleotide sequence ID" value="XM_015772942.1"/>
</dbReference>
<dbReference type="SMR" id="Q8H7U8"/>
<dbReference type="FunCoup" id="Q8H7U8">
    <property type="interactions" value="10"/>
</dbReference>
<dbReference type="STRING" id="39947.Q8H7U8"/>
<dbReference type="PaxDb" id="39947-Q8H7U8"/>
<dbReference type="EnsemblPlants" id="Os03t0109300-01">
    <property type="protein sequence ID" value="Os03t0109300-01"/>
    <property type="gene ID" value="Os03g0109300"/>
</dbReference>
<dbReference type="Gramene" id="Os03t0109300-01">
    <property type="protein sequence ID" value="Os03t0109300-01"/>
    <property type="gene ID" value="Os03g0109300"/>
</dbReference>
<dbReference type="KEGG" id="dosa:Os03g0109300"/>
<dbReference type="eggNOG" id="ENOG502QSR9">
    <property type="taxonomic scope" value="Eukaryota"/>
</dbReference>
<dbReference type="HOGENOM" id="CLU_058336_2_0_1"/>
<dbReference type="InParanoid" id="Q8H7U8"/>
<dbReference type="OMA" id="CERKEMK"/>
<dbReference type="OrthoDB" id="414463at2759"/>
<dbReference type="Proteomes" id="UP000000763">
    <property type="component" value="Chromosome 3"/>
</dbReference>
<dbReference type="Proteomes" id="UP000007752">
    <property type="component" value="Chromosome 3"/>
</dbReference>
<dbReference type="Proteomes" id="UP000059680">
    <property type="component" value="Chromosome 3"/>
</dbReference>
<dbReference type="GO" id="GO:0005829">
    <property type="term" value="C:cytosol"/>
    <property type="evidence" value="ECO:0000318"/>
    <property type="project" value="GO_Central"/>
</dbReference>
<dbReference type="GO" id="GO:0005634">
    <property type="term" value="C:nucleus"/>
    <property type="evidence" value="ECO:0000318"/>
    <property type="project" value="GO_Central"/>
</dbReference>
<dbReference type="GO" id="GO:0102682">
    <property type="term" value="F:cytokinin riboside 5'-monophosphate phosphoribohydrolase activity"/>
    <property type="evidence" value="ECO:0000318"/>
    <property type="project" value="GO_Central"/>
</dbReference>
<dbReference type="GO" id="GO:0009691">
    <property type="term" value="P:cytokinin biosynthetic process"/>
    <property type="evidence" value="ECO:0000318"/>
    <property type="project" value="GO_Central"/>
</dbReference>
<dbReference type="FunFam" id="3.40.50.450:FF:000005">
    <property type="entry name" value="CASP-like protein"/>
    <property type="match status" value="1"/>
</dbReference>
<dbReference type="Gene3D" id="3.40.50.450">
    <property type="match status" value="1"/>
</dbReference>
<dbReference type="InterPro" id="IPR005269">
    <property type="entry name" value="LOG"/>
</dbReference>
<dbReference type="InterPro" id="IPR031100">
    <property type="entry name" value="LOG_fam"/>
</dbReference>
<dbReference type="NCBIfam" id="TIGR00730">
    <property type="entry name" value="Rossman fold protein, TIGR00730 family"/>
    <property type="match status" value="1"/>
</dbReference>
<dbReference type="PANTHER" id="PTHR31223:SF40">
    <property type="entry name" value="CYTOKININ RIBOSIDE 5'-MONOPHOSPHATE PHOSPHORIBOHYDROLASE LOGL3-RELATED"/>
    <property type="match status" value="1"/>
</dbReference>
<dbReference type="PANTHER" id="PTHR31223">
    <property type="entry name" value="LOG FAMILY PROTEIN YJL055W"/>
    <property type="match status" value="1"/>
</dbReference>
<dbReference type="Pfam" id="PF03641">
    <property type="entry name" value="Lysine_decarbox"/>
    <property type="match status" value="1"/>
</dbReference>
<dbReference type="SUPFAM" id="SSF102405">
    <property type="entry name" value="MCP/YpsA-like"/>
    <property type="match status" value="1"/>
</dbReference>
<protein>
    <recommendedName>
        <fullName>Probable cytokinin riboside 5'-monophosphate phosphoribohydrolase LOGL3</fullName>
        <ecNumber>3.2.2.n1</ecNumber>
    </recommendedName>
    <alternativeName>
        <fullName>Protein LONELY GUY-like 3</fullName>
    </alternativeName>
</protein>
<proteinExistence type="evidence at transcript level"/>
<comment type="function">
    <text evidence="1">Cytokinin-activating enzyme working in the direct activation pathway. Phosphoribohydrolase that converts inactive cytokinin nucleotides to the biologically active free-base forms (By similarity).</text>
</comment>
<comment type="catalytic activity">
    <reaction>
        <text>N(6)-(dimethylallyl)adenosine 5'-phosphate + H2O = N(6)-dimethylallyladenine + D-ribose 5-phosphate</text>
        <dbReference type="Rhea" id="RHEA:48560"/>
        <dbReference type="ChEBI" id="CHEBI:15377"/>
        <dbReference type="ChEBI" id="CHEBI:17660"/>
        <dbReference type="ChEBI" id="CHEBI:57526"/>
        <dbReference type="ChEBI" id="CHEBI:78346"/>
        <dbReference type="EC" id="3.2.2.n1"/>
    </reaction>
</comment>
<comment type="catalytic activity">
    <reaction>
        <text>9-ribosyl-trans-zeatin 5'-phosphate + H2O = trans-zeatin + D-ribose 5-phosphate</text>
        <dbReference type="Rhea" id="RHEA:48564"/>
        <dbReference type="ChEBI" id="CHEBI:15377"/>
        <dbReference type="ChEBI" id="CHEBI:16522"/>
        <dbReference type="ChEBI" id="CHEBI:78346"/>
        <dbReference type="ChEBI" id="CHEBI:87947"/>
        <dbReference type="EC" id="3.2.2.n1"/>
    </reaction>
</comment>
<comment type="tissue specificity">
    <text evidence="3">Expressed in roots, leaves, stems, tiller buds, shoot apex, immature inflorescences and flowers.</text>
</comment>
<comment type="similarity">
    <text evidence="4">Belongs to the LOG family.</text>
</comment>
<comment type="sequence caution" evidence="4">
    <conflict type="erroneous gene model prediction">
        <sequence resource="EMBL-CDS" id="ABF93573"/>
    </conflict>
</comment>
<name>LOGL3_ORYSJ</name>